<organism>
    <name type="scientific">Mycolicibacterium smegmatis (strain ATCC 700084 / mc(2)155)</name>
    <name type="common">Mycobacterium smegmatis</name>
    <dbReference type="NCBI Taxonomy" id="246196"/>
    <lineage>
        <taxon>Bacteria</taxon>
        <taxon>Bacillati</taxon>
        <taxon>Actinomycetota</taxon>
        <taxon>Actinomycetes</taxon>
        <taxon>Mycobacteriales</taxon>
        <taxon>Mycobacteriaceae</taxon>
        <taxon>Mycolicibacterium</taxon>
    </lineage>
</organism>
<dbReference type="EMBL" id="CP000480">
    <property type="protein sequence ID" value="ABK76091.1"/>
    <property type="molecule type" value="Genomic_DNA"/>
</dbReference>
<dbReference type="EMBL" id="CP001663">
    <property type="protein sequence ID" value="AFP42546.1"/>
    <property type="molecule type" value="Genomic_DNA"/>
</dbReference>
<dbReference type="RefSeq" id="WP_003897699.1">
    <property type="nucleotide sequence ID" value="NZ_SIJM01000027.1"/>
</dbReference>
<dbReference type="RefSeq" id="YP_890498.1">
    <property type="nucleotide sequence ID" value="NC_008596.1"/>
</dbReference>
<dbReference type="SMR" id="A0R5R0"/>
<dbReference type="STRING" id="246196.MSMEG_6279"/>
<dbReference type="PaxDb" id="246196-MSMEI_6115"/>
<dbReference type="GeneID" id="93460895"/>
<dbReference type="KEGG" id="msb:LJ00_31040"/>
<dbReference type="KEGG" id="msg:MSMEI_6115"/>
<dbReference type="KEGG" id="msm:MSMEG_6279"/>
<dbReference type="PATRIC" id="fig|246196.19.peg.6116"/>
<dbReference type="eggNOG" id="COG0353">
    <property type="taxonomic scope" value="Bacteria"/>
</dbReference>
<dbReference type="OrthoDB" id="9802672at2"/>
<dbReference type="Proteomes" id="UP000000757">
    <property type="component" value="Chromosome"/>
</dbReference>
<dbReference type="Proteomes" id="UP000006158">
    <property type="component" value="Chromosome"/>
</dbReference>
<dbReference type="GO" id="GO:0003677">
    <property type="term" value="F:DNA binding"/>
    <property type="evidence" value="ECO:0007669"/>
    <property type="project" value="UniProtKB-UniRule"/>
</dbReference>
<dbReference type="GO" id="GO:0008270">
    <property type="term" value="F:zinc ion binding"/>
    <property type="evidence" value="ECO:0007669"/>
    <property type="project" value="UniProtKB-KW"/>
</dbReference>
<dbReference type="GO" id="GO:0006310">
    <property type="term" value="P:DNA recombination"/>
    <property type="evidence" value="ECO:0007669"/>
    <property type="project" value="UniProtKB-UniRule"/>
</dbReference>
<dbReference type="GO" id="GO:0006281">
    <property type="term" value="P:DNA repair"/>
    <property type="evidence" value="ECO:0007669"/>
    <property type="project" value="UniProtKB-UniRule"/>
</dbReference>
<dbReference type="CDD" id="cd00080">
    <property type="entry name" value="H3TH_StructSpec-5'-nucleases"/>
    <property type="match status" value="1"/>
</dbReference>
<dbReference type="CDD" id="cd01025">
    <property type="entry name" value="TOPRIM_recR"/>
    <property type="match status" value="1"/>
</dbReference>
<dbReference type="Gene3D" id="3.30.60.80">
    <property type="match status" value="1"/>
</dbReference>
<dbReference type="Gene3D" id="3.40.1360.10">
    <property type="match status" value="1"/>
</dbReference>
<dbReference type="Gene3D" id="6.10.250.240">
    <property type="match status" value="1"/>
</dbReference>
<dbReference type="Gene3D" id="1.10.8.420">
    <property type="entry name" value="RecR Domain 1"/>
    <property type="match status" value="1"/>
</dbReference>
<dbReference type="HAMAP" id="MF_00017">
    <property type="entry name" value="RecR"/>
    <property type="match status" value="1"/>
</dbReference>
<dbReference type="InterPro" id="IPR000093">
    <property type="entry name" value="DNA_Rcmb_RecR"/>
</dbReference>
<dbReference type="InterPro" id="IPR003583">
    <property type="entry name" value="Hlx-hairpin-Hlx_DNA-bd_motif"/>
</dbReference>
<dbReference type="InterPro" id="IPR023627">
    <property type="entry name" value="Rcmb_RecR"/>
</dbReference>
<dbReference type="InterPro" id="IPR015967">
    <property type="entry name" value="Rcmb_RecR_Znf"/>
</dbReference>
<dbReference type="InterPro" id="IPR006171">
    <property type="entry name" value="TOPRIM_dom"/>
</dbReference>
<dbReference type="InterPro" id="IPR034137">
    <property type="entry name" value="TOPRIM_RecR"/>
</dbReference>
<dbReference type="NCBIfam" id="TIGR00615">
    <property type="entry name" value="recR"/>
    <property type="match status" value="1"/>
</dbReference>
<dbReference type="PANTHER" id="PTHR30446">
    <property type="entry name" value="RECOMBINATION PROTEIN RECR"/>
    <property type="match status" value="1"/>
</dbReference>
<dbReference type="PANTHER" id="PTHR30446:SF0">
    <property type="entry name" value="RECOMBINATION PROTEIN RECR"/>
    <property type="match status" value="1"/>
</dbReference>
<dbReference type="Pfam" id="PF21175">
    <property type="entry name" value="RecR_C"/>
    <property type="match status" value="1"/>
</dbReference>
<dbReference type="Pfam" id="PF21176">
    <property type="entry name" value="RecR_HhH"/>
    <property type="match status" value="1"/>
</dbReference>
<dbReference type="Pfam" id="PF02132">
    <property type="entry name" value="RecR_ZnF"/>
    <property type="match status" value="1"/>
</dbReference>
<dbReference type="Pfam" id="PF13662">
    <property type="entry name" value="Toprim_4"/>
    <property type="match status" value="1"/>
</dbReference>
<dbReference type="SMART" id="SM00278">
    <property type="entry name" value="HhH1"/>
    <property type="match status" value="1"/>
</dbReference>
<dbReference type="SMART" id="SM00493">
    <property type="entry name" value="TOPRIM"/>
    <property type="match status" value="1"/>
</dbReference>
<dbReference type="SUPFAM" id="SSF111304">
    <property type="entry name" value="Recombination protein RecR"/>
    <property type="match status" value="1"/>
</dbReference>
<dbReference type="PROSITE" id="PS01300">
    <property type="entry name" value="RECR"/>
    <property type="match status" value="1"/>
</dbReference>
<dbReference type="PROSITE" id="PS50880">
    <property type="entry name" value="TOPRIM"/>
    <property type="match status" value="1"/>
</dbReference>
<comment type="function">
    <text evidence="1">May play a role in DNA repair. It seems to be involved in an RecBC-independent recombinational process of DNA repair. It may act with RecF and RecO.</text>
</comment>
<comment type="similarity">
    <text evidence="1">Belongs to the RecR family.</text>
</comment>
<sequence length="203" mass="22102">MFEGPVQDLIDELGKLPGIGPKSAQRIAFHLLSVEPPDIDRLTAVLGRIRDGVTFCSVCGNVSDEERCRICSDPRRDASLVCVVEEPKDVQAVERTREFRGRYHVLGGALDPLSGIGPEQLRIRELLNRIGERVEGVDVAEVIIATDPNTEGEATATYLVRMLRDIPGLTVTRIASGLPMGGDLEFADELTLGRALAGRRAMV</sequence>
<proteinExistence type="inferred from homology"/>
<reference key="1">
    <citation type="submission" date="2006-10" db="EMBL/GenBank/DDBJ databases">
        <authorList>
            <person name="Fleischmann R.D."/>
            <person name="Dodson R.J."/>
            <person name="Haft D.H."/>
            <person name="Merkel J.S."/>
            <person name="Nelson W.C."/>
            <person name="Fraser C.M."/>
        </authorList>
    </citation>
    <scope>NUCLEOTIDE SEQUENCE [LARGE SCALE GENOMIC DNA]</scope>
    <source>
        <strain>ATCC 700084 / mc(2)155</strain>
    </source>
</reference>
<reference key="2">
    <citation type="journal article" date="2007" name="Genome Biol.">
        <title>Interrupted coding sequences in Mycobacterium smegmatis: authentic mutations or sequencing errors?</title>
        <authorList>
            <person name="Deshayes C."/>
            <person name="Perrodou E."/>
            <person name="Gallien S."/>
            <person name="Euphrasie D."/>
            <person name="Schaeffer C."/>
            <person name="Van-Dorsselaer A."/>
            <person name="Poch O."/>
            <person name="Lecompte O."/>
            <person name="Reyrat J.-M."/>
        </authorList>
    </citation>
    <scope>NUCLEOTIDE SEQUENCE [LARGE SCALE GENOMIC DNA]</scope>
    <source>
        <strain>ATCC 700084 / mc(2)155</strain>
    </source>
</reference>
<reference key="3">
    <citation type="journal article" date="2009" name="Genome Res.">
        <title>Ortho-proteogenomics: multiple proteomes investigation through orthology and a new MS-based protocol.</title>
        <authorList>
            <person name="Gallien S."/>
            <person name="Perrodou E."/>
            <person name="Carapito C."/>
            <person name="Deshayes C."/>
            <person name="Reyrat J.-M."/>
            <person name="Van Dorsselaer A."/>
            <person name="Poch O."/>
            <person name="Schaeffer C."/>
            <person name="Lecompte O."/>
        </authorList>
    </citation>
    <scope>NUCLEOTIDE SEQUENCE [LARGE SCALE GENOMIC DNA]</scope>
    <source>
        <strain>ATCC 700084 / mc(2)155</strain>
    </source>
</reference>
<feature type="chain" id="PRO_0000322912" description="Recombination protein RecR">
    <location>
        <begin position="1"/>
        <end position="203"/>
    </location>
</feature>
<feature type="domain" description="Toprim" evidence="1">
    <location>
        <begin position="79"/>
        <end position="179"/>
    </location>
</feature>
<feature type="zinc finger region" description="C4-type" evidence="1">
    <location>
        <begin position="56"/>
        <end position="71"/>
    </location>
</feature>
<name>RECR_MYCS2</name>
<accession>A0R5R0</accession>
<accession>I7GFL2</accession>
<keyword id="KW-0227">DNA damage</keyword>
<keyword id="KW-0233">DNA recombination</keyword>
<keyword id="KW-0234">DNA repair</keyword>
<keyword id="KW-0479">Metal-binding</keyword>
<keyword id="KW-1185">Reference proteome</keyword>
<keyword id="KW-0862">Zinc</keyword>
<keyword id="KW-0863">Zinc-finger</keyword>
<protein>
    <recommendedName>
        <fullName evidence="1">Recombination protein RecR</fullName>
    </recommendedName>
</protein>
<gene>
    <name evidence="1" type="primary">recR</name>
    <name type="ordered locus">MSMEG_6279</name>
    <name type="ordered locus">MSMEI_6115</name>
</gene>
<evidence type="ECO:0000255" key="1">
    <source>
        <dbReference type="HAMAP-Rule" id="MF_00017"/>
    </source>
</evidence>